<evidence type="ECO:0000255" key="1">
    <source>
        <dbReference type="HAMAP-Rule" id="MF_00575"/>
    </source>
</evidence>
<feature type="chain" id="PRO_1000129536" description="UDP-2,3-diacylglucosamine hydrolase">
    <location>
        <begin position="1"/>
        <end position="240"/>
    </location>
</feature>
<feature type="binding site" evidence="1">
    <location>
        <position position="8"/>
    </location>
    <ligand>
        <name>Mn(2+)</name>
        <dbReference type="ChEBI" id="CHEBI:29035"/>
        <label>1</label>
    </ligand>
</feature>
<feature type="binding site" evidence="1">
    <location>
        <position position="10"/>
    </location>
    <ligand>
        <name>Mn(2+)</name>
        <dbReference type="ChEBI" id="CHEBI:29035"/>
        <label>1</label>
    </ligand>
</feature>
<feature type="binding site" evidence="1">
    <location>
        <position position="41"/>
    </location>
    <ligand>
        <name>Mn(2+)</name>
        <dbReference type="ChEBI" id="CHEBI:29035"/>
        <label>1</label>
    </ligand>
</feature>
<feature type="binding site" evidence="1">
    <location>
        <position position="41"/>
    </location>
    <ligand>
        <name>Mn(2+)</name>
        <dbReference type="ChEBI" id="CHEBI:29035"/>
        <label>2</label>
    </ligand>
</feature>
<feature type="binding site" evidence="1">
    <location>
        <begin position="79"/>
        <end position="80"/>
    </location>
    <ligand>
        <name>substrate</name>
    </ligand>
</feature>
<feature type="binding site" evidence="1">
    <location>
        <position position="79"/>
    </location>
    <ligand>
        <name>Mn(2+)</name>
        <dbReference type="ChEBI" id="CHEBI:29035"/>
        <label>2</label>
    </ligand>
</feature>
<feature type="binding site" evidence="1">
    <location>
        <position position="114"/>
    </location>
    <ligand>
        <name>Mn(2+)</name>
        <dbReference type="ChEBI" id="CHEBI:29035"/>
        <label>2</label>
    </ligand>
</feature>
<feature type="binding site" evidence="1">
    <location>
        <position position="122"/>
    </location>
    <ligand>
        <name>substrate</name>
    </ligand>
</feature>
<feature type="binding site" evidence="1">
    <location>
        <position position="160"/>
    </location>
    <ligand>
        <name>substrate</name>
    </ligand>
</feature>
<feature type="binding site" evidence="1">
    <location>
        <position position="164"/>
    </location>
    <ligand>
        <name>substrate</name>
    </ligand>
</feature>
<feature type="binding site" evidence="1">
    <location>
        <position position="167"/>
    </location>
    <ligand>
        <name>substrate</name>
    </ligand>
</feature>
<feature type="binding site" evidence="1">
    <location>
        <position position="195"/>
    </location>
    <ligand>
        <name>Mn(2+)</name>
        <dbReference type="ChEBI" id="CHEBI:29035"/>
        <label>2</label>
    </ligand>
</feature>
<feature type="binding site" evidence="1">
    <location>
        <position position="195"/>
    </location>
    <ligand>
        <name>substrate</name>
    </ligand>
</feature>
<feature type="binding site" evidence="1">
    <location>
        <position position="197"/>
    </location>
    <ligand>
        <name>Mn(2+)</name>
        <dbReference type="ChEBI" id="CHEBI:29035"/>
        <label>1</label>
    </ligand>
</feature>
<protein>
    <recommendedName>
        <fullName evidence="1">UDP-2,3-diacylglucosamine hydrolase</fullName>
        <ecNumber evidence="1">3.6.1.54</ecNumber>
    </recommendedName>
    <alternativeName>
        <fullName evidence="1">UDP-2,3-diacylglucosamine diphosphatase</fullName>
    </alternativeName>
</protein>
<accession>B5BD00</accession>
<reference key="1">
    <citation type="journal article" date="2009" name="BMC Genomics">
        <title>Pseudogene accumulation in the evolutionary histories of Salmonella enterica serovars Paratyphi A and Typhi.</title>
        <authorList>
            <person name="Holt K.E."/>
            <person name="Thomson N.R."/>
            <person name="Wain J."/>
            <person name="Langridge G.C."/>
            <person name="Hasan R."/>
            <person name="Bhutta Z.A."/>
            <person name="Quail M.A."/>
            <person name="Norbertczak H."/>
            <person name="Walker D."/>
            <person name="Simmonds M."/>
            <person name="White B."/>
            <person name="Bason N."/>
            <person name="Mungall K."/>
            <person name="Dougan G."/>
            <person name="Parkhill J."/>
        </authorList>
    </citation>
    <scope>NUCLEOTIDE SEQUENCE [LARGE SCALE GENOMIC DNA]</scope>
    <source>
        <strain>AKU_12601</strain>
    </source>
</reference>
<organism>
    <name type="scientific">Salmonella paratyphi A (strain AKU_12601)</name>
    <dbReference type="NCBI Taxonomy" id="554290"/>
    <lineage>
        <taxon>Bacteria</taxon>
        <taxon>Pseudomonadati</taxon>
        <taxon>Pseudomonadota</taxon>
        <taxon>Gammaproteobacteria</taxon>
        <taxon>Enterobacterales</taxon>
        <taxon>Enterobacteriaceae</taxon>
        <taxon>Salmonella</taxon>
    </lineage>
</organism>
<name>LPXH_SALPK</name>
<proteinExistence type="inferred from homology"/>
<dbReference type="EC" id="3.6.1.54" evidence="1"/>
<dbReference type="EMBL" id="FM200053">
    <property type="protein sequence ID" value="CAR60241.1"/>
    <property type="molecule type" value="Genomic_DNA"/>
</dbReference>
<dbReference type="RefSeq" id="WP_000212289.1">
    <property type="nucleotide sequence ID" value="NC_011147.1"/>
</dbReference>
<dbReference type="SMR" id="B5BD00"/>
<dbReference type="KEGG" id="sek:SSPA2034"/>
<dbReference type="HOGENOM" id="CLU_074586_0_0_6"/>
<dbReference type="UniPathway" id="UPA00359">
    <property type="reaction ID" value="UER00480"/>
</dbReference>
<dbReference type="Proteomes" id="UP000001869">
    <property type="component" value="Chromosome"/>
</dbReference>
<dbReference type="GO" id="GO:0005737">
    <property type="term" value="C:cytoplasm"/>
    <property type="evidence" value="ECO:0007669"/>
    <property type="project" value="InterPro"/>
</dbReference>
<dbReference type="GO" id="GO:0019897">
    <property type="term" value="C:extrinsic component of plasma membrane"/>
    <property type="evidence" value="ECO:0007669"/>
    <property type="project" value="UniProtKB-UniRule"/>
</dbReference>
<dbReference type="GO" id="GO:0030145">
    <property type="term" value="F:manganese ion binding"/>
    <property type="evidence" value="ECO:0007669"/>
    <property type="project" value="UniProtKB-UniRule"/>
</dbReference>
<dbReference type="GO" id="GO:0008758">
    <property type="term" value="F:UDP-2,3-diacylglucosamine hydrolase activity"/>
    <property type="evidence" value="ECO:0007669"/>
    <property type="project" value="UniProtKB-UniRule"/>
</dbReference>
<dbReference type="GO" id="GO:0009245">
    <property type="term" value="P:lipid A biosynthetic process"/>
    <property type="evidence" value="ECO:0007669"/>
    <property type="project" value="UniProtKB-UniRule"/>
</dbReference>
<dbReference type="CDD" id="cd07398">
    <property type="entry name" value="MPP_YbbF-LpxH"/>
    <property type="match status" value="1"/>
</dbReference>
<dbReference type="FunFam" id="3.60.21.10:FF:000012">
    <property type="entry name" value="UDP-2,3-diacylglucosamine hydrolase"/>
    <property type="match status" value="1"/>
</dbReference>
<dbReference type="Gene3D" id="3.60.21.10">
    <property type="match status" value="1"/>
</dbReference>
<dbReference type="HAMAP" id="MF_00575">
    <property type="entry name" value="LpxH"/>
    <property type="match status" value="1"/>
</dbReference>
<dbReference type="InterPro" id="IPR004843">
    <property type="entry name" value="Calcineurin-like_PHP_ApaH"/>
</dbReference>
<dbReference type="InterPro" id="IPR043461">
    <property type="entry name" value="LpxH-like"/>
</dbReference>
<dbReference type="InterPro" id="IPR029052">
    <property type="entry name" value="Metallo-depent_PP-like"/>
</dbReference>
<dbReference type="InterPro" id="IPR010138">
    <property type="entry name" value="UDP-diacylglucosamine_Hdrlase"/>
</dbReference>
<dbReference type="NCBIfam" id="TIGR01854">
    <property type="entry name" value="lipid_A_lpxH"/>
    <property type="match status" value="1"/>
</dbReference>
<dbReference type="NCBIfam" id="NF003743">
    <property type="entry name" value="PRK05340.1"/>
    <property type="match status" value="1"/>
</dbReference>
<dbReference type="PANTHER" id="PTHR34990:SF1">
    <property type="entry name" value="UDP-2,3-DIACYLGLUCOSAMINE HYDROLASE"/>
    <property type="match status" value="1"/>
</dbReference>
<dbReference type="PANTHER" id="PTHR34990">
    <property type="entry name" value="UDP-2,3-DIACYLGLUCOSAMINE HYDROLASE-RELATED"/>
    <property type="match status" value="1"/>
</dbReference>
<dbReference type="Pfam" id="PF00149">
    <property type="entry name" value="Metallophos"/>
    <property type="match status" value="1"/>
</dbReference>
<dbReference type="SUPFAM" id="SSF56300">
    <property type="entry name" value="Metallo-dependent phosphatases"/>
    <property type="match status" value="1"/>
</dbReference>
<sequence length="240" mass="26966">MATLFIADLHLQTEEPAIVAGFLRFLAVEARQADALYILGDLFEAWIGDDDPNPLHREMAVAIKSLVDSGVPCFFIHGNRDFLIGKRFARESGMTLLPQEKVLDLYGRNVLIMHGDTLCTDDAGYQAFRAKVHNPWVQRLFLTLPLFIRRRIAARMRAGSKAANSSKSLDIMDVNAQTVVAEMEKHRVQWLIHGHTHRPAVHELSANDQPAFRVVLGAWHHEGSMVKVTPDNVELIAFPL</sequence>
<keyword id="KW-0997">Cell inner membrane</keyword>
<keyword id="KW-1003">Cell membrane</keyword>
<keyword id="KW-0378">Hydrolase</keyword>
<keyword id="KW-0441">Lipid A biosynthesis</keyword>
<keyword id="KW-0444">Lipid biosynthesis</keyword>
<keyword id="KW-0443">Lipid metabolism</keyword>
<keyword id="KW-0464">Manganese</keyword>
<keyword id="KW-0472">Membrane</keyword>
<keyword id="KW-0479">Metal-binding</keyword>
<gene>
    <name evidence="1" type="primary">lpxH</name>
    <name type="ordered locus">SSPA2034</name>
</gene>
<comment type="function">
    <text evidence="1">Hydrolyzes the pyrophosphate bond of UDP-2,3-diacylglucosamine to yield 2,3-diacylglucosamine 1-phosphate (lipid X) and UMP by catalyzing the attack of water at the alpha-P atom. Involved in the biosynthesis of lipid A, a phosphorylated glycolipid that anchors the lipopolysaccharide to the outer membrane of the cell.</text>
</comment>
<comment type="catalytic activity">
    <reaction evidence="1">
        <text>UDP-2-N,3-O-bis[(3R)-3-hydroxytetradecanoyl]-alpha-D-glucosamine + H2O = 2-N,3-O-bis[(3R)-3-hydroxytetradecanoyl]-alpha-D-glucosaminyl 1-phosphate + UMP + 2 H(+)</text>
        <dbReference type="Rhea" id="RHEA:25213"/>
        <dbReference type="ChEBI" id="CHEBI:15377"/>
        <dbReference type="ChEBI" id="CHEBI:15378"/>
        <dbReference type="ChEBI" id="CHEBI:57865"/>
        <dbReference type="ChEBI" id="CHEBI:57957"/>
        <dbReference type="ChEBI" id="CHEBI:78847"/>
        <dbReference type="EC" id="3.6.1.54"/>
    </reaction>
</comment>
<comment type="cofactor">
    <cofactor evidence="1">
        <name>Mn(2+)</name>
        <dbReference type="ChEBI" id="CHEBI:29035"/>
    </cofactor>
    <text evidence="1">Binds 2 Mn(2+) ions per subunit in a binuclear metal center.</text>
</comment>
<comment type="pathway">
    <text evidence="1">Glycolipid biosynthesis; lipid IV(A) biosynthesis; lipid IV(A) from (3R)-3-hydroxytetradecanoyl-[acyl-carrier-protein] and UDP-N-acetyl-alpha-D-glucosamine: step 4/6.</text>
</comment>
<comment type="subcellular location">
    <subcellularLocation>
        <location evidence="1">Cell inner membrane</location>
        <topology evidence="1">Peripheral membrane protein</topology>
        <orientation evidence="1">Cytoplasmic side</orientation>
    </subcellularLocation>
</comment>
<comment type="similarity">
    <text evidence="1">Belongs to the LpxH family.</text>
</comment>